<protein>
    <recommendedName>
        <fullName>NADH-cytochrome b5 reductase 2-A</fullName>
        <ecNumber>1.6.2.2</ecNumber>
    </recommendedName>
    <alternativeName>
        <fullName>Mitochondrial cytochrome b reductase A</fullName>
    </alternativeName>
</protein>
<dbReference type="EC" id="1.6.2.2"/>
<dbReference type="EMBL" id="DS480392">
    <property type="protein sequence ID" value="EDO18237.1"/>
    <property type="molecule type" value="Genomic_DNA"/>
</dbReference>
<dbReference type="RefSeq" id="XP_001646095.1">
    <property type="nucleotide sequence ID" value="XM_001646045.1"/>
</dbReference>
<dbReference type="SMR" id="A7THS1"/>
<dbReference type="FunCoup" id="A7THS1">
    <property type="interactions" value="369"/>
</dbReference>
<dbReference type="STRING" id="436907.A7THS1"/>
<dbReference type="GeneID" id="5546512"/>
<dbReference type="KEGG" id="vpo:Kpol_543p67"/>
<dbReference type="eggNOG" id="KOG0534">
    <property type="taxonomic scope" value="Eukaryota"/>
</dbReference>
<dbReference type="HOGENOM" id="CLU_003827_9_1_1"/>
<dbReference type="InParanoid" id="A7THS1"/>
<dbReference type="OMA" id="KGPEMQK"/>
<dbReference type="OrthoDB" id="432685at2759"/>
<dbReference type="PhylomeDB" id="A7THS1"/>
<dbReference type="Proteomes" id="UP000000267">
    <property type="component" value="Unassembled WGS sequence"/>
</dbReference>
<dbReference type="GO" id="GO:0005758">
    <property type="term" value="C:mitochondrial intermembrane space"/>
    <property type="evidence" value="ECO:0007669"/>
    <property type="project" value="EnsemblFungi"/>
</dbReference>
<dbReference type="GO" id="GO:0005741">
    <property type="term" value="C:mitochondrial outer membrane"/>
    <property type="evidence" value="ECO:0007669"/>
    <property type="project" value="UniProtKB-SubCell"/>
</dbReference>
<dbReference type="GO" id="GO:0004128">
    <property type="term" value="F:cytochrome-b5 reductase activity, acting on NAD(P)H"/>
    <property type="evidence" value="ECO:0007669"/>
    <property type="project" value="UniProtKB-EC"/>
</dbReference>
<dbReference type="GO" id="GO:0003954">
    <property type="term" value="F:NADH dehydrogenase activity"/>
    <property type="evidence" value="ECO:0007669"/>
    <property type="project" value="EnsemblFungi"/>
</dbReference>
<dbReference type="GO" id="GO:0034599">
    <property type="term" value="P:cellular response to oxidative stress"/>
    <property type="evidence" value="ECO:0007669"/>
    <property type="project" value="EnsemblFungi"/>
</dbReference>
<dbReference type="GO" id="GO:0006696">
    <property type="term" value="P:ergosterol biosynthetic process"/>
    <property type="evidence" value="ECO:0007669"/>
    <property type="project" value="EnsemblFungi"/>
</dbReference>
<dbReference type="CDD" id="cd06183">
    <property type="entry name" value="cyt_b5_reduct_like"/>
    <property type="match status" value="1"/>
</dbReference>
<dbReference type="FunFam" id="2.40.30.10:FF:000032">
    <property type="entry name" value="NADH-cytochrome b5 reductase"/>
    <property type="match status" value="1"/>
</dbReference>
<dbReference type="FunFam" id="3.40.50.80:FF:000009">
    <property type="entry name" value="NADH-cytochrome b5 reductase"/>
    <property type="match status" value="1"/>
</dbReference>
<dbReference type="Gene3D" id="3.40.50.80">
    <property type="entry name" value="Nucleotide-binding domain of ferredoxin-NADP reductase (FNR) module"/>
    <property type="match status" value="1"/>
</dbReference>
<dbReference type="Gene3D" id="2.40.30.10">
    <property type="entry name" value="Translation factors"/>
    <property type="match status" value="1"/>
</dbReference>
<dbReference type="InterPro" id="IPR001834">
    <property type="entry name" value="CBR-like"/>
</dbReference>
<dbReference type="InterPro" id="IPR008333">
    <property type="entry name" value="Cbr1-like_FAD-bd_dom"/>
</dbReference>
<dbReference type="InterPro" id="IPR017927">
    <property type="entry name" value="FAD-bd_FR_type"/>
</dbReference>
<dbReference type="InterPro" id="IPR001709">
    <property type="entry name" value="Flavoprot_Pyr_Nucl_cyt_Rdtase"/>
</dbReference>
<dbReference type="InterPro" id="IPR039261">
    <property type="entry name" value="FNR_nucleotide-bd"/>
</dbReference>
<dbReference type="InterPro" id="IPR001433">
    <property type="entry name" value="OxRdtase_FAD/NAD-bd"/>
</dbReference>
<dbReference type="InterPro" id="IPR017938">
    <property type="entry name" value="Riboflavin_synthase-like_b-brl"/>
</dbReference>
<dbReference type="PANTHER" id="PTHR19370">
    <property type="entry name" value="NADH-CYTOCHROME B5 REDUCTASE"/>
    <property type="match status" value="1"/>
</dbReference>
<dbReference type="PANTHER" id="PTHR19370:SF171">
    <property type="entry name" value="NADH-CYTOCHROME B5 REDUCTASE 2"/>
    <property type="match status" value="1"/>
</dbReference>
<dbReference type="Pfam" id="PF00970">
    <property type="entry name" value="FAD_binding_6"/>
    <property type="match status" value="1"/>
</dbReference>
<dbReference type="Pfam" id="PF00175">
    <property type="entry name" value="NAD_binding_1"/>
    <property type="match status" value="1"/>
</dbReference>
<dbReference type="PRINTS" id="PR00406">
    <property type="entry name" value="CYTB5RDTASE"/>
</dbReference>
<dbReference type="PRINTS" id="PR00371">
    <property type="entry name" value="FPNCR"/>
</dbReference>
<dbReference type="SUPFAM" id="SSF52343">
    <property type="entry name" value="Ferredoxin reductase-like, C-terminal NADP-linked domain"/>
    <property type="match status" value="1"/>
</dbReference>
<dbReference type="SUPFAM" id="SSF63380">
    <property type="entry name" value="Riboflavin synthase domain-like"/>
    <property type="match status" value="1"/>
</dbReference>
<dbReference type="PROSITE" id="PS51384">
    <property type="entry name" value="FAD_FR"/>
    <property type="match status" value="1"/>
</dbReference>
<evidence type="ECO:0000250" key="1"/>
<evidence type="ECO:0000255" key="2"/>
<evidence type="ECO:0000255" key="3">
    <source>
        <dbReference type="PROSITE-ProRule" id="PRU00716"/>
    </source>
</evidence>
<evidence type="ECO:0000305" key="4"/>
<proteinExistence type="inferred from homology"/>
<reference key="1">
    <citation type="journal article" date="2007" name="Proc. Natl. Acad. Sci. U.S.A.">
        <title>Independent sorting-out of thousands of duplicated gene pairs in two yeast species descended from a whole-genome duplication.</title>
        <authorList>
            <person name="Scannell D.R."/>
            <person name="Frank A.C."/>
            <person name="Conant G.C."/>
            <person name="Byrne K.P."/>
            <person name="Woolfit M."/>
            <person name="Wolfe K.H."/>
        </authorList>
    </citation>
    <scope>NUCLEOTIDE SEQUENCE [LARGE SCALE GENOMIC DNA]</scope>
    <source>
        <strain>ATCC 22028 / DSM 70294 / BCRC 21397 / CBS 2163 / NBRC 10782 / NRRL Y-8283 / UCD 57-17</strain>
    </source>
</reference>
<name>MCR1A_VANPO</name>
<feature type="chain" id="PRO_0000330192" description="NADH-cytochrome b5 reductase 2-A">
    <location>
        <begin position="1"/>
        <end position="296"/>
    </location>
</feature>
<feature type="transmembrane region" description="Helical" evidence="2">
    <location>
        <begin position="15"/>
        <end position="35"/>
    </location>
</feature>
<feature type="domain" description="FAD-binding FR-type" evidence="3">
    <location>
        <begin position="47"/>
        <end position="151"/>
    </location>
</feature>
<feature type="binding site" evidence="1">
    <location>
        <begin position="154"/>
        <end position="189"/>
    </location>
    <ligand>
        <name>FAD</name>
        <dbReference type="ChEBI" id="CHEBI:57692"/>
    </ligand>
</feature>
<organism>
    <name type="scientific">Vanderwaltozyma polyspora (strain ATCC 22028 / DSM 70294 / BCRC 21397 / CBS 2163 / NBRC 10782 / NRRL Y-8283 / UCD 57-17)</name>
    <name type="common">Kluyveromyces polysporus</name>
    <dbReference type="NCBI Taxonomy" id="436907"/>
    <lineage>
        <taxon>Eukaryota</taxon>
        <taxon>Fungi</taxon>
        <taxon>Dikarya</taxon>
        <taxon>Ascomycota</taxon>
        <taxon>Saccharomycotina</taxon>
        <taxon>Saccharomycetes</taxon>
        <taxon>Saccharomycetales</taxon>
        <taxon>Saccharomycetaceae</taxon>
        <taxon>Vanderwaltozyma</taxon>
    </lineage>
</organism>
<keyword id="KW-0274">FAD</keyword>
<keyword id="KW-0285">Flavoprotein</keyword>
<keyword id="KW-0472">Membrane</keyword>
<keyword id="KW-0496">Mitochondrion</keyword>
<keyword id="KW-1000">Mitochondrion outer membrane</keyword>
<keyword id="KW-0520">NAD</keyword>
<keyword id="KW-0560">Oxidoreductase</keyword>
<keyword id="KW-1185">Reference proteome</keyword>
<keyword id="KW-0812">Transmembrane</keyword>
<keyword id="KW-1133">Transmembrane helix</keyword>
<gene>
    <name type="primary">MCR1A</name>
    <name type="ORF">Kpol_543p67</name>
</gene>
<sequence length="296" mass="33138">MFARIARINPKILPFVIGAPTIALCSYYYSSGAFLRNESSKVFIGDNNWIDLPISRIEEISHDTKRFTFKYPSQDSVSGLVVASALLTKFVTPKGSNVIRPYTPVSDVDEKGSLDLVIKHYPDGKMTNHIFSLKVNDTLSFKGPIPKWKWVPNSFESITLIGGGTGITPLYQLIHAITKNPNDKTKIRLFYSNKTSQDVLMKKELDELQAKYPDQLRITYFITTPDKGYKGESGFISKEFIASNADKPSPKSHVFVCGPPPFMNAYSGDKKSPTDQGELVGILKELGYTIDQVYKF</sequence>
<accession>A7THS1</accession>
<comment type="function">
    <text evidence="1">May mediate the reduction of outer membrane cytochrome b5.</text>
</comment>
<comment type="catalytic activity">
    <reaction>
        <text>2 Fe(III)-[cytochrome b5] + NADH = 2 Fe(II)-[cytochrome b5] + NAD(+) + H(+)</text>
        <dbReference type="Rhea" id="RHEA:46680"/>
        <dbReference type="Rhea" id="RHEA-COMP:10438"/>
        <dbReference type="Rhea" id="RHEA-COMP:10439"/>
        <dbReference type="ChEBI" id="CHEBI:15378"/>
        <dbReference type="ChEBI" id="CHEBI:29033"/>
        <dbReference type="ChEBI" id="CHEBI:29034"/>
        <dbReference type="ChEBI" id="CHEBI:57540"/>
        <dbReference type="ChEBI" id="CHEBI:57945"/>
        <dbReference type="EC" id="1.6.2.2"/>
    </reaction>
</comment>
<comment type="cofactor">
    <cofactor evidence="1">
        <name>FAD</name>
        <dbReference type="ChEBI" id="CHEBI:57692"/>
    </cofactor>
</comment>
<comment type="subcellular location">
    <subcellularLocation>
        <location evidence="1">Mitochondrion outer membrane</location>
        <topology evidence="1">Single-pass membrane protein</topology>
    </subcellularLocation>
</comment>
<comment type="similarity">
    <text evidence="4">Belongs to the flavoprotein pyridine nucleotide cytochrome reductase family.</text>
</comment>